<dbReference type="EC" id="2.7.1.130" evidence="1"/>
<dbReference type="EMBL" id="CP001113">
    <property type="protein sequence ID" value="ACF65249.1"/>
    <property type="molecule type" value="Genomic_DNA"/>
</dbReference>
<dbReference type="RefSeq" id="WP_000561677.1">
    <property type="nucleotide sequence ID" value="NZ_CCMR01000003.1"/>
</dbReference>
<dbReference type="SMR" id="B4T149"/>
<dbReference type="KEGG" id="see:SNSL254_A1018"/>
<dbReference type="HOGENOM" id="CLU_038816_2_0_6"/>
<dbReference type="UniPathway" id="UPA00359">
    <property type="reaction ID" value="UER00482"/>
</dbReference>
<dbReference type="Proteomes" id="UP000008824">
    <property type="component" value="Chromosome"/>
</dbReference>
<dbReference type="GO" id="GO:0005886">
    <property type="term" value="C:plasma membrane"/>
    <property type="evidence" value="ECO:0007669"/>
    <property type="project" value="TreeGrafter"/>
</dbReference>
<dbReference type="GO" id="GO:0005524">
    <property type="term" value="F:ATP binding"/>
    <property type="evidence" value="ECO:0007669"/>
    <property type="project" value="UniProtKB-UniRule"/>
</dbReference>
<dbReference type="GO" id="GO:0009029">
    <property type="term" value="F:tetraacyldisaccharide 4'-kinase activity"/>
    <property type="evidence" value="ECO:0007669"/>
    <property type="project" value="UniProtKB-UniRule"/>
</dbReference>
<dbReference type="GO" id="GO:0009245">
    <property type="term" value="P:lipid A biosynthetic process"/>
    <property type="evidence" value="ECO:0007669"/>
    <property type="project" value="UniProtKB-UniRule"/>
</dbReference>
<dbReference type="GO" id="GO:0009244">
    <property type="term" value="P:lipopolysaccharide core region biosynthetic process"/>
    <property type="evidence" value="ECO:0007669"/>
    <property type="project" value="TreeGrafter"/>
</dbReference>
<dbReference type="HAMAP" id="MF_00409">
    <property type="entry name" value="LpxK"/>
    <property type="match status" value="1"/>
</dbReference>
<dbReference type="InterPro" id="IPR003758">
    <property type="entry name" value="LpxK"/>
</dbReference>
<dbReference type="InterPro" id="IPR027417">
    <property type="entry name" value="P-loop_NTPase"/>
</dbReference>
<dbReference type="NCBIfam" id="TIGR00682">
    <property type="entry name" value="lpxK"/>
    <property type="match status" value="1"/>
</dbReference>
<dbReference type="PANTHER" id="PTHR42724">
    <property type="entry name" value="TETRAACYLDISACCHARIDE 4'-KINASE"/>
    <property type="match status" value="1"/>
</dbReference>
<dbReference type="PANTHER" id="PTHR42724:SF1">
    <property type="entry name" value="TETRAACYLDISACCHARIDE 4'-KINASE, MITOCHONDRIAL-RELATED"/>
    <property type="match status" value="1"/>
</dbReference>
<dbReference type="Pfam" id="PF02606">
    <property type="entry name" value="LpxK"/>
    <property type="match status" value="1"/>
</dbReference>
<dbReference type="SUPFAM" id="SSF52540">
    <property type="entry name" value="P-loop containing nucleoside triphosphate hydrolases"/>
    <property type="match status" value="1"/>
</dbReference>
<gene>
    <name evidence="1" type="primary">lpxK</name>
    <name type="ordered locus">SNSL254_A1018</name>
</gene>
<evidence type="ECO:0000255" key="1">
    <source>
        <dbReference type="HAMAP-Rule" id="MF_00409"/>
    </source>
</evidence>
<keyword id="KW-0067">ATP-binding</keyword>
<keyword id="KW-0418">Kinase</keyword>
<keyword id="KW-0441">Lipid A biosynthesis</keyword>
<keyword id="KW-0444">Lipid biosynthesis</keyword>
<keyword id="KW-0443">Lipid metabolism</keyword>
<keyword id="KW-0547">Nucleotide-binding</keyword>
<keyword id="KW-0808">Transferase</keyword>
<proteinExistence type="inferred from homology"/>
<protein>
    <recommendedName>
        <fullName evidence="1">Tetraacyldisaccharide 4'-kinase</fullName>
        <ecNumber evidence="1">2.7.1.130</ecNumber>
    </recommendedName>
    <alternativeName>
        <fullName evidence="1">Lipid A 4'-kinase</fullName>
    </alternativeName>
</protein>
<accession>B4T149</accession>
<comment type="function">
    <text evidence="1">Transfers the gamma-phosphate of ATP to the 4'-position of a tetraacyldisaccharide 1-phosphate intermediate (termed DS-1-P) to form tetraacyldisaccharide 1,4'-bis-phosphate (lipid IVA).</text>
</comment>
<comment type="catalytic activity">
    <reaction evidence="1">
        <text>a lipid A disaccharide + ATP = a lipid IVA + ADP + H(+)</text>
        <dbReference type="Rhea" id="RHEA:67840"/>
        <dbReference type="ChEBI" id="CHEBI:15378"/>
        <dbReference type="ChEBI" id="CHEBI:30616"/>
        <dbReference type="ChEBI" id="CHEBI:176343"/>
        <dbReference type="ChEBI" id="CHEBI:176425"/>
        <dbReference type="ChEBI" id="CHEBI:456216"/>
        <dbReference type="EC" id="2.7.1.130"/>
    </reaction>
</comment>
<comment type="pathway">
    <text evidence="1">Glycolipid biosynthesis; lipid IV(A) biosynthesis; lipid IV(A) from (3R)-3-hydroxytetradecanoyl-[acyl-carrier-protein] and UDP-N-acetyl-alpha-D-glucosamine: step 6/6.</text>
</comment>
<comment type="similarity">
    <text evidence="1">Belongs to the LpxK family.</text>
</comment>
<reference key="1">
    <citation type="journal article" date="2011" name="J. Bacteriol.">
        <title>Comparative genomics of 28 Salmonella enterica isolates: evidence for CRISPR-mediated adaptive sublineage evolution.</title>
        <authorList>
            <person name="Fricke W.F."/>
            <person name="Mammel M.K."/>
            <person name="McDermott P.F."/>
            <person name="Tartera C."/>
            <person name="White D.G."/>
            <person name="Leclerc J.E."/>
            <person name="Ravel J."/>
            <person name="Cebula T.A."/>
        </authorList>
    </citation>
    <scope>NUCLEOTIDE SEQUENCE [LARGE SCALE GENOMIC DNA]</scope>
    <source>
        <strain>SL254</strain>
    </source>
</reference>
<organism>
    <name type="scientific">Salmonella newport (strain SL254)</name>
    <dbReference type="NCBI Taxonomy" id="423368"/>
    <lineage>
        <taxon>Bacteria</taxon>
        <taxon>Pseudomonadati</taxon>
        <taxon>Pseudomonadota</taxon>
        <taxon>Gammaproteobacteria</taxon>
        <taxon>Enterobacterales</taxon>
        <taxon>Enterobacteriaceae</taxon>
        <taxon>Salmonella</taxon>
    </lineage>
</organism>
<feature type="chain" id="PRO_1000123741" description="Tetraacyldisaccharide 4'-kinase">
    <location>
        <begin position="1"/>
        <end position="325"/>
    </location>
</feature>
<feature type="binding site" evidence="1">
    <location>
        <begin position="55"/>
        <end position="62"/>
    </location>
    <ligand>
        <name>ATP</name>
        <dbReference type="ChEBI" id="CHEBI:30616"/>
    </ligand>
</feature>
<name>LPXK_SALNS</name>
<sequence>MIARIWSGESPLWRLLLPLSWLYGLVSGAIRLSYKLGFKRAWRAPVPVVVVGNLTAGGNGKTPVVIWLVEKLQQRGVRVGVVSRGYGGKAAAYPLLLTPETTTAEAGDEPVLIYQRTGAPVAVAPERAAAVKAILAAHNVQIIITDDGLQHYRLARDIEIVVIDGVRRFGNGWWLPAGPMRERASRLKTVDAAIVNGGVARAGEIPMQLAPGLAVNLRTGARCDVAQLSNIVAMAGIGHPPRFFATLEACGAHPQKCVPLADHQTLAPADVQALVGEGQTLVMTEKDAVKCCAFAEDNWWFLPVDARLSGEQPDKLLEHITSLVR</sequence>